<organism>
    <name type="scientific">Californiconus californicus</name>
    <name type="common">California cone</name>
    <name type="synonym">Conus californicus</name>
    <dbReference type="NCBI Taxonomy" id="1736779"/>
    <lineage>
        <taxon>Eukaryota</taxon>
        <taxon>Metazoa</taxon>
        <taxon>Spiralia</taxon>
        <taxon>Lophotrochozoa</taxon>
        <taxon>Mollusca</taxon>
        <taxon>Gastropoda</taxon>
        <taxon>Caenogastropoda</taxon>
        <taxon>Neogastropoda</taxon>
        <taxon>Conoidea</taxon>
        <taxon>Conidae</taxon>
        <taxon>Californiconus</taxon>
    </lineage>
</organism>
<comment type="function">
    <text evidence="4">Probable neurotoxin with unknown target. Possibly targets ion channels.</text>
</comment>
<comment type="subcellular location">
    <subcellularLocation>
        <location evidence="5">Secreted</location>
    </subcellularLocation>
</comment>
<comment type="tissue specificity">
    <text evidence="5">Expressed by the venom duct.</text>
</comment>
<comment type="domain">
    <text evidence="1">The presence of a 'disulfide through disulfide knot' structurally defines this protein as a knottin.</text>
</comment>
<comment type="domain">
    <text>The cysteine framework is VI/VII (C-C-CC-C-C).</text>
</comment>
<dbReference type="EMBL" id="GU306157">
    <property type="protein sequence ID" value="ADB04236.1"/>
    <property type="molecule type" value="mRNA"/>
</dbReference>
<dbReference type="ConoServer" id="3967">
    <property type="toxin name" value="Cal6.3a precursor"/>
</dbReference>
<dbReference type="GO" id="GO:0005576">
    <property type="term" value="C:extracellular region"/>
    <property type="evidence" value="ECO:0007669"/>
    <property type="project" value="UniProtKB-SubCell"/>
</dbReference>
<dbReference type="GO" id="GO:0099106">
    <property type="term" value="F:ion channel regulator activity"/>
    <property type="evidence" value="ECO:0007669"/>
    <property type="project" value="UniProtKB-KW"/>
</dbReference>
<dbReference type="GO" id="GO:0090729">
    <property type="term" value="F:toxin activity"/>
    <property type="evidence" value="ECO:0007669"/>
    <property type="project" value="UniProtKB-KW"/>
</dbReference>
<proteinExistence type="inferred from homology"/>
<name>U63A_CONCL</name>
<accession>D2Y493</accession>
<sequence length="78" mass="9104">MRFLHFLIVAVLLASFMESGAMPRNPKKKRGWDTPAPCRYCQWNGPQCCVYYCSSCNYEEAREEGHYVSSHLLERQGR</sequence>
<feature type="signal peptide" evidence="2">
    <location>
        <begin position="1"/>
        <end position="21"/>
    </location>
</feature>
<feature type="propeptide" id="PRO_5000566312" evidence="5">
    <location>
        <begin position="22"/>
        <end position="26"/>
    </location>
</feature>
<feature type="peptide" id="PRO_5000566313" description="Conotoxin Cal6.3a" evidence="5">
    <location>
        <begin position="31"/>
        <end position="76"/>
    </location>
</feature>
<feature type="modified residue" description="Glutamine amide" evidence="1">
    <location>
        <position position="76"/>
    </location>
</feature>
<feature type="disulfide bond" evidence="1">
    <location>
        <begin position="38"/>
        <end position="49"/>
    </location>
</feature>
<feature type="disulfide bond" evidence="1">
    <location>
        <begin position="41"/>
        <end position="53"/>
    </location>
</feature>
<feature type="disulfide bond" evidence="1">
    <location>
        <begin position="48"/>
        <end position="56"/>
    </location>
</feature>
<reference key="1">
    <citation type="journal article" date="2011" name="Toxicon">
        <title>Diversity of conotoxin types from Conus californicus reflects a diversity of prey types and a novel evolutionary history.</title>
        <authorList>
            <person name="Elliger C.A."/>
            <person name="Richmond T.A."/>
            <person name="Lebaric Z.N."/>
            <person name="Pierce N.T."/>
            <person name="Sweedler J.V."/>
            <person name="Gilly W.F."/>
        </authorList>
    </citation>
    <scope>NUCLEOTIDE SEQUENCE [MRNA]</scope>
    <source>
        <tissue>Venom duct</tissue>
    </source>
</reference>
<protein>
    <recommendedName>
        <fullName evidence="3">Conotoxin Cal6.3a</fullName>
    </recommendedName>
</protein>
<evidence type="ECO:0000250" key="1"/>
<evidence type="ECO:0000255" key="2"/>
<evidence type="ECO:0000303" key="3">
    <source>
    </source>
</evidence>
<evidence type="ECO:0000305" key="4"/>
<evidence type="ECO:0000305" key="5">
    <source>
    </source>
</evidence>
<keyword id="KW-0027">Amidation</keyword>
<keyword id="KW-0165">Cleavage on pair of basic residues</keyword>
<keyword id="KW-1015">Disulfide bond</keyword>
<keyword id="KW-0872">Ion channel impairing toxin</keyword>
<keyword id="KW-0960">Knottin</keyword>
<keyword id="KW-0528">Neurotoxin</keyword>
<keyword id="KW-0964">Secreted</keyword>
<keyword id="KW-0732">Signal</keyword>
<keyword id="KW-0800">Toxin</keyword>